<evidence type="ECO:0000250" key="1">
    <source>
        <dbReference type="UniProtKB" id="P03891"/>
    </source>
</evidence>
<evidence type="ECO:0000250" key="2">
    <source>
        <dbReference type="UniProtKB" id="P03892"/>
    </source>
</evidence>
<evidence type="ECO:0000255" key="3"/>
<evidence type="ECO:0000305" key="4"/>
<gene>
    <name evidence="1" type="primary">MT-ND2</name>
    <name type="synonym">MTND2</name>
    <name type="synonym">NADH2</name>
    <name type="synonym">ND2</name>
</gene>
<comment type="function">
    <text evidence="1">Core subunit of the mitochondrial membrane respiratory chain NADH dehydrogenase (Complex I) which catalyzes electron transfer from NADH through the respiratory chain, using ubiquinone as an electron acceptor. Essential for the catalytic activity and assembly of complex I.</text>
</comment>
<comment type="catalytic activity">
    <reaction evidence="1">
        <text>a ubiquinone + NADH + 5 H(+)(in) = a ubiquinol + NAD(+) + 4 H(+)(out)</text>
        <dbReference type="Rhea" id="RHEA:29091"/>
        <dbReference type="Rhea" id="RHEA-COMP:9565"/>
        <dbReference type="Rhea" id="RHEA-COMP:9566"/>
        <dbReference type="ChEBI" id="CHEBI:15378"/>
        <dbReference type="ChEBI" id="CHEBI:16389"/>
        <dbReference type="ChEBI" id="CHEBI:17976"/>
        <dbReference type="ChEBI" id="CHEBI:57540"/>
        <dbReference type="ChEBI" id="CHEBI:57945"/>
        <dbReference type="EC" id="7.1.1.2"/>
    </reaction>
</comment>
<comment type="subunit">
    <text evidence="1 2">Core subunit of respiratory chain NADH dehydrogenase (Complex I) which is composed of 45 different subunits. Interacts with TMEM242 (By similarity).</text>
</comment>
<comment type="subcellular location">
    <subcellularLocation>
        <location evidence="2">Mitochondrion inner membrane</location>
        <topology evidence="3">Multi-pass membrane protein</topology>
    </subcellularLocation>
</comment>
<comment type="similarity">
    <text evidence="4">Belongs to the complex I subunit 2 family.</text>
</comment>
<name>NU2M_SYLGA</name>
<dbReference type="EC" id="7.1.1.2" evidence="1"/>
<dbReference type="EMBL" id="AY691835">
    <property type="protein sequence ID" value="AAW29758.1"/>
    <property type="molecule type" value="Genomic_DNA"/>
</dbReference>
<dbReference type="SMR" id="Q2TQ17"/>
<dbReference type="GO" id="GO:0005743">
    <property type="term" value="C:mitochondrial inner membrane"/>
    <property type="evidence" value="ECO:0000250"/>
    <property type="project" value="UniProtKB"/>
</dbReference>
<dbReference type="GO" id="GO:0008137">
    <property type="term" value="F:NADH dehydrogenase (ubiquinone) activity"/>
    <property type="evidence" value="ECO:0000250"/>
    <property type="project" value="UniProtKB"/>
</dbReference>
<dbReference type="GO" id="GO:0006120">
    <property type="term" value="P:mitochondrial electron transport, NADH to ubiquinone"/>
    <property type="evidence" value="ECO:0000250"/>
    <property type="project" value="UniProtKB"/>
</dbReference>
<dbReference type="GO" id="GO:0032981">
    <property type="term" value="P:mitochondrial respiratory chain complex I assembly"/>
    <property type="evidence" value="ECO:0000250"/>
    <property type="project" value="UniProtKB"/>
</dbReference>
<dbReference type="InterPro" id="IPR050175">
    <property type="entry name" value="Complex_I_Subunit_2"/>
</dbReference>
<dbReference type="InterPro" id="IPR010933">
    <property type="entry name" value="NADH_DH_su2_C"/>
</dbReference>
<dbReference type="InterPro" id="IPR003917">
    <property type="entry name" value="NADH_UbQ_OxRdtase_chain2"/>
</dbReference>
<dbReference type="InterPro" id="IPR001750">
    <property type="entry name" value="ND/Mrp_TM"/>
</dbReference>
<dbReference type="PANTHER" id="PTHR46552">
    <property type="entry name" value="NADH-UBIQUINONE OXIDOREDUCTASE CHAIN 2"/>
    <property type="match status" value="1"/>
</dbReference>
<dbReference type="PANTHER" id="PTHR46552:SF1">
    <property type="entry name" value="NADH-UBIQUINONE OXIDOREDUCTASE CHAIN 2"/>
    <property type="match status" value="1"/>
</dbReference>
<dbReference type="Pfam" id="PF06444">
    <property type="entry name" value="NADH_dehy_S2_C"/>
    <property type="match status" value="1"/>
</dbReference>
<dbReference type="Pfam" id="PF00361">
    <property type="entry name" value="Proton_antipo_M"/>
    <property type="match status" value="1"/>
</dbReference>
<dbReference type="PRINTS" id="PR01436">
    <property type="entry name" value="NADHDHGNASE2"/>
</dbReference>
<proteinExistence type="inferred from homology"/>
<organism>
    <name type="scientific">Sylvisorex granti</name>
    <name type="common">Grant's forest shrew</name>
    <dbReference type="NCBI Taxonomy" id="307107"/>
    <lineage>
        <taxon>Eukaryota</taxon>
        <taxon>Metazoa</taxon>
        <taxon>Chordata</taxon>
        <taxon>Craniata</taxon>
        <taxon>Vertebrata</taxon>
        <taxon>Euteleostomi</taxon>
        <taxon>Mammalia</taxon>
        <taxon>Eutheria</taxon>
        <taxon>Laurasiatheria</taxon>
        <taxon>Eulipotyphla</taxon>
        <taxon>Soricidae</taxon>
        <taxon>Crocidurinae</taxon>
        <taxon>Sylvisorex</taxon>
    </lineage>
</organism>
<sequence>MNPMTSTILLMTIMSGTSIVLMSSHWFMTWLGFEMNMMAIIPILMKNYNPRSMEAATKYFLTQATASMILVLAIIINLMHSGQWTITITENITASTLITIALVMKLGLAPFHFWVPEVTQGVSLSSGLILLTWQKIAPLSLLYQIYPSINTNLLLTMSLLSIMIGGWGGLNQTQLRKIMAYSSIAHMGWMIVIMIYNPNLSLLNLFIYIMMTSSMFMLLIANSATSTSSLSQSWNINPTITTMMMATLLSLGGLPPLTGFAPKWMIIQELTKNNSVILPTLMAILALLNLFFYMRLTYSTALTMFPTMNNMKLMWQFQPTSMTPMMTMLISISTLALPLTPLFISLS</sequence>
<accession>Q2TQ17</accession>
<geneLocation type="mitochondrion"/>
<keyword id="KW-0249">Electron transport</keyword>
<keyword id="KW-0472">Membrane</keyword>
<keyword id="KW-0496">Mitochondrion</keyword>
<keyword id="KW-0999">Mitochondrion inner membrane</keyword>
<keyword id="KW-0520">NAD</keyword>
<keyword id="KW-0679">Respiratory chain</keyword>
<keyword id="KW-1278">Translocase</keyword>
<keyword id="KW-0812">Transmembrane</keyword>
<keyword id="KW-1133">Transmembrane helix</keyword>
<keyword id="KW-0813">Transport</keyword>
<keyword id="KW-0830">Ubiquinone</keyword>
<reference key="1">
    <citation type="submission" date="2004-07" db="EMBL/GenBank/DDBJ databases">
        <title>Phylogeny, phylogeography, and geographic variation of Sylvisorex howelli, an endemic shrew of the Eastern Arc mountains.</title>
        <authorList>
            <person name="Stanley W.T."/>
            <person name="Olson L.E."/>
        </authorList>
    </citation>
    <scope>NUCLEOTIDE SEQUENCE [GENOMIC DNA]</scope>
</reference>
<feature type="chain" id="PRO_0000226713" description="NADH-ubiquinone oxidoreductase chain 2">
    <location>
        <begin position="1"/>
        <end position="347"/>
    </location>
</feature>
<feature type="transmembrane region" description="Helical" evidence="3">
    <location>
        <begin position="3"/>
        <end position="23"/>
    </location>
</feature>
<feature type="transmembrane region" description="Helical" evidence="3">
    <location>
        <begin position="25"/>
        <end position="45"/>
    </location>
</feature>
<feature type="transmembrane region" description="Helical" evidence="3">
    <location>
        <begin position="59"/>
        <end position="79"/>
    </location>
</feature>
<feature type="transmembrane region" description="Helical" evidence="3">
    <location>
        <begin position="96"/>
        <end position="116"/>
    </location>
</feature>
<feature type="transmembrane region" description="Helical" evidence="3">
    <location>
        <begin position="122"/>
        <end position="142"/>
    </location>
</feature>
<feature type="transmembrane region" description="Helical" evidence="3">
    <location>
        <begin position="149"/>
        <end position="169"/>
    </location>
</feature>
<feature type="transmembrane region" description="Helical" evidence="3">
    <location>
        <begin position="178"/>
        <end position="198"/>
    </location>
</feature>
<feature type="transmembrane region" description="Helical" evidence="3">
    <location>
        <begin position="200"/>
        <end position="220"/>
    </location>
</feature>
<feature type="transmembrane region" description="Helical" evidence="3">
    <location>
        <begin position="240"/>
        <end position="260"/>
    </location>
</feature>
<feature type="transmembrane region" description="Helical" evidence="3">
    <location>
        <begin position="274"/>
        <end position="294"/>
    </location>
</feature>
<feature type="transmembrane region" description="Helical" evidence="3">
    <location>
        <begin position="326"/>
        <end position="346"/>
    </location>
</feature>
<protein>
    <recommendedName>
        <fullName evidence="1">NADH-ubiquinone oxidoreductase chain 2</fullName>
        <ecNumber evidence="1">7.1.1.2</ecNumber>
    </recommendedName>
    <alternativeName>
        <fullName>NADH dehydrogenase subunit 2</fullName>
    </alternativeName>
</protein>